<organism>
    <name type="scientific">Metallosphaera sedula (strain ATCC 51363 / DSM 5348 / JCM 9185 / NBRC 15509 / TH2)</name>
    <dbReference type="NCBI Taxonomy" id="399549"/>
    <lineage>
        <taxon>Archaea</taxon>
        <taxon>Thermoproteota</taxon>
        <taxon>Thermoprotei</taxon>
        <taxon>Sulfolobales</taxon>
        <taxon>Sulfolobaceae</taxon>
        <taxon>Metallosphaera</taxon>
    </lineage>
</organism>
<feature type="chain" id="PRO_1000072552" description="Small ribosomal subunit protein eS24">
    <location>
        <begin position="1"/>
        <end position="113"/>
    </location>
</feature>
<accession>A4YIV8</accession>
<comment type="similarity">
    <text evidence="1">Belongs to the eukaryotic ribosomal protein eS24 family.</text>
</comment>
<reference key="1">
    <citation type="journal article" date="2008" name="Appl. Environ. Microbiol.">
        <title>The genome sequence of the metal-mobilizing, extremely thermoacidophilic archaeon Metallosphaera sedula provides insights into bioleaching-associated metabolism.</title>
        <authorList>
            <person name="Auernik K.S."/>
            <person name="Maezato Y."/>
            <person name="Blum P.H."/>
            <person name="Kelly R.M."/>
        </authorList>
    </citation>
    <scope>NUCLEOTIDE SEQUENCE [LARGE SCALE GENOMIC DNA]</scope>
    <source>
        <strain>ATCC 51363 / DSM 5348 / JCM 9185 / NBRC 15509 / TH2</strain>
    </source>
</reference>
<dbReference type="EMBL" id="CP000682">
    <property type="protein sequence ID" value="ABP96360.1"/>
    <property type="molecule type" value="Genomic_DNA"/>
</dbReference>
<dbReference type="RefSeq" id="WP_012022147.1">
    <property type="nucleotide sequence ID" value="NZ_CP139956.1"/>
</dbReference>
<dbReference type="SMR" id="A4YIV8"/>
<dbReference type="STRING" id="399549.Msed_2222"/>
<dbReference type="KEGG" id="mse:Msed_2222"/>
<dbReference type="eggNOG" id="arCOG04182">
    <property type="taxonomic scope" value="Archaea"/>
</dbReference>
<dbReference type="HOGENOM" id="CLU_107248_3_2_2"/>
<dbReference type="Proteomes" id="UP000000242">
    <property type="component" value="Chromosome"/>
</dbReference>
<dbReference type="GO" id="GO:1990904">
    <property type="term" value="C:ribonucleoprotein complex"/>
    <property type="evidence" value="ECO:0007669"/>
    <property type="project" value="UniProtKB-KW"/>
</dbReference>
<dbReference type="GO" id="GO:0005840">
    <property type="term" value="C:ribosome"/>
    <property type="evidence" value="ECO:0007669"/>
    <property type="project" value="UniProtKB-KW"/>
</dbReference>
<dbReference type="GO" id="GO:0003735">
    <property type="term" value="F:structural constituent of ribosome"/>
    <property type="evidence" value="ECO:0007669"/>
    <property type="project" value="InterPro"/>
</dbReference>
<dbReference type="GO" id="GO:0006412">
    <property type="term" value="P:translation"/>
    <property type="evidence" value="ECO:0007669"/>
    <property type="project" value="UniProtKB-UniRule"/>
</dbReference>
<dbReference type="Gene3D" id="3.30.70.330">
    <property type="match status" value="1"/>
</dbReference>
<dbReference type="HAMAP" id="MF_00545">
    <property type="entry name" value="Ribosomal_eS24"/>
    <property type="match status" value="1"/>
</dbReference>
<dbReference type="InterPro" id="IPR012677">
    <property type="entry name" value="Nucleotide-bd_a/b_plait_sf"/>
</dbReference>
<dbReference type="InterPro" id="IPR001976">
    <property type="entry name" value="Ribosomal_eS24"/>
</dbReference>
<dbReference type="InterPro" id="IPR012678">
    <property type="entry name" value="Ribosomal_uL23/eL15/eS24_sf"/>
</dbReference>
<dbReference type="PANTHER" id="PTHR10496">
    <property type="entry name" value="40S RIBOSOMAL PROTEIN S24"/>
    <property type="match status" value="1"/>
</dbReference>
<dbReference type="Pfam" id="PF01282">
    <property type="entry name" value="Ribosomal_S24e"/>
    <property type="match status" value="1"/>
</dbReference>
<dbReference type="SUPFAM" id="SSF54189">
    <property type="entry name" value="Ribosomal proteins S24e, L23 and L15e"/>
    <property type="match status" value="1"/>
</dbReference>
<name>RS24_METS5</name>
<keyword id="KW-1185">Reference proteome</keyword>
<keyword id="KW-0687">Ribonucleoprotein</keyword>
<keyword id="KW-0689">Ribosomal protein</keyword>
<proteinExistence type="inferred from homology"/>
<sequence>MSQAQQIKVSDKAEALVENLKENKVIGRKEIKIKVYHIGSPTPSRADIRKAISSFIGAKEDLVVIRKINTGYGAGISEATIHVYSEKDVLSKFEPAHLVNRGNKAKTQGEASG</sequence>
<evidence type="ECO:0000255" key="1">
    <source>
        <dbReference type="HAMAP-Rule" id="MF_00545"/>
    </source>
</evidence>
<evidence type="ECO:0000305" key="2"/>
<gene>
    <name evidence="1" type="primary">rps24e</name>
    <name type="ordered locus">Msed_2222</name>
</gene>
<protein>
    <recommendedName>
        <fullName evidence="1">Small ribosomal subunit protein eS24</fullName>
    </recommendedName>
    <alternativeName>
        <fullName evidence="2">30S ribosomal protein S24e</fullName>
    </alternativeName>
</protein>